<evidence type="ECO:0000250" key="1">
    <source>
        <dbReference type="UniProtKB" id="C0LGT6"/>
    </source>
</evidence>
<evidence type="ECO:0000250" key="2">
    <source>
        <dbReference type="UniProtKB" id="O22476"/>
    </source>
</evidence>
<evidence type="ECO:0000250" key="3">
    <source>
        <dbReference type="UniProtKB" id="Q9M0G7"/>
    </source>
</evidence>
<evidence type="ECO:0000255" key="4"/>
<evidence type="ECO:0000255" key="5">
    <source>
        <dbReference type="PROSITE-ProRule" id="PRU00159"/>
    </source>
</evidence>
<evidence type="ECO:0000255" key="6">
    <source>
        <dbReference type="PROSITE-ProRule" id="PRU10027"/>
    </source>
</evidence>
<evidence type="ECO:0000256" key="7">
    <source>
        <dbReference type="SAM" id="MobiDB-lite"/>
    </source>
</evidence>
<evidence type="ECO:0000269" key="8">
    <source>
    </source>
</evidence>
<evidence type="ECO:0000269" key="9">
    <source>
    </source>
</evidence>
<evidence type="ECO:0000269" key="10">
    <source>
    </source>
</evidence>
<evidence type="ECO:0000269" key="11">
    <source>
    </source>
</evidence>
<evidence type="ECO:0000269" key="12">
    <source>
    </source>
</evidence>
<evidence type="ECO:0000269" key="13">
    <source>
    </source>
</evidence>
<evidence type="ECO:0007744" key="14">
    <source>
        <dbReference type="PDB" id="5IXO"/>
    </source>
</evidence>
<evidence type="ECO:0007744" key="15">
    <source>
        <dbReference type="PDB" id="5IYX"/>
    </source>
</evidence>
<evidence type="ECO:0007829" key="16">
    <source>
        <dbReference type="PDB" id="5IXO"/>
    </source>
</evidence>
<evidence type="ECO:0007829" key="17">
    <source>
        <dbReference type="PDB" id="5IXQ"/>
    </source>
</evidence>
<gene>
    <name type="primary">RLK5</name>
    <name type="synonym">HAE</name>
    <name type="ordered locus">At4g28490</name>
    <name type="ORF">F21O9.180</name>
</gene>
<dbReference type="EC" id="2.7.10.1"/>
<dbReference type="EC" id="2.7.11.1"/>
<dbReference type="EMBL" id="M84660">
    <property type="protein sequence ID" value="AAA32859.1"/>
    <property type="molecule type" value="mRNA"/>
</dbReference>
<dbReference type="EMBL" id="FJ708755">
    <property type="protein sequence ID" value="ACN59349.1"/>
    <property type="molecule type" value="mRNA"/>
</dbReference>
<dbReference type="EMBL" id="AL021749">
    <property type="protein sequence ID" value="CAA16889.1"/>
    <property type="molecule type" value="Genomic_DNA"/>
</dbReference>
<dbReference type="EMBL" id="AL161572">
    <property type="protein sequence ID" value="CAB79651.1"/>
    <property type="molecule type" value="Genomic_DNA"/>
</dbReference>
<dbReference type="EMBL" id="CP002687">
    <property type="protein sequence ID" value="AEE85494.1"/>
    <property type="molecule type" value="Genomic_DNA"/>
</dbReference>
<dbReference type="PIR" id="S27756">
    <property type="entry name" value="S27756"/>
</dbReference>
<dbReference type="RefSeq" id="NP_194578.1">
    <property type="nucleotide sequence ID" value="NM_118991.3"/>
</dbReference>
<dbReference type="PDB" id="5IXO">
    <property type="method" value="X-ray"/>
    <property type="resolution" value="1.74 A"/>
    <property type="chains" value="A=20-620"/>
</dbReference>
<dbReference type="PDB" id="5IXQ">
    <property type="method" value="X-ray"/>
    <property type="resolution" value="1.86 A"/>
    <property type="chains" value="A=20-620"/>
</dbReference>
<dbReference type="PDB" id="5IXT">
    <property type="method" value="X-ray"/>
    <property type="resolution" value="1.94 A"/>
    <property type="chains" value="A=20-620"/>
</dbReference>
<dbReference type="PDB" id="5IYV">
    <property type="method" value="X-ray"/>
    <property type="resolution" value="2.56 A"/>
    <property type="chains" value="A=20-620"/>
</dbReference>
<dbReference type="PDB" id="5IYX">
    <property type="method" value="X-ray"/>
    <property type="resolution" value="2.43 A"/>
    <property type="chains" value="A=20-620"/>
</dbReference>
<dbReference type="PDBsum" id="5IXO"/>
<dbReference type="PDBsum" id="5IXQ"/>
<dbReference type="PDBsum" id="5IXT"/>
<dbReference type="PDBsum" id="5IYV"/>
<dbReference type="PDBsum" id="5IYX"/>
<dbReference type="SMR" id="P47735"/>
<dbReference type="BioGRID" id="14254">
    <property type="interactions" value="26"/>
</dbReference>
<dbReference type="IntAct" id="P47735">
    <property type="interactions" value="22"/>
</dbReference>
<dbReference type="STRING" id="3702.P47735"/>
<dbReference type="GlyCosmos" id="P47735">
    <property type="glycosylation" value="9 sites, No reported glycans"/>
</dbReference>
<dbReference type="GlyGen" id="P47735">
    <property type="glycosylation" value="9 sites"/>
</dbReference>
<dbReference type="iPTMnet" id="P47735"/>
<dbReference type="PaxDb" id="3702-AT4G28490.1"/>
<dbReference type="ProteomicsDB" id="228128"/>
<dbReference type="EnsemblPlants" id="AT4G28490.1">
    <property type="protein sequence ID" value="AT4G28490.1"/>
    <property type="gene ID" value="AT4G28490"/>
</dbReference>
<dbReference type="GeneID" id="828967"/>
<dbReference type="Gramene" id="AT4G28490.1">
    <property type="protein sequence ID" value="AT4G28490.1"/>
    <property type="gene ID" value="AT4G28490"/>
</dbReference>
<dbReference type="KEGG" id="ath:AT4G28490"/>
<dbReference type="Araport" id="AT4G28490"/>
<dbReference type="TAIR" id="AT4G28490">
    <property type="gene designation" value="HAE"/>
</dbReference>
<dbReference type="eggNOG" id="ENOG502QQFB">
    <property type="taxonomic scope" value="Eukaryota"/>
</dbReference>
<dbReference type="HOGENOM" id="CLU_000288_22_1_1"/>
<dbReference type="InParanoid" id="P47735"/>
<dbReference type="OMA" id="EYEIADC"/>
<dbReference type="PhylomeDB" id="P47735"/>
<dbReference type="BRENDA" id="2.7.10.2">
    <property type="organism ID" value="399"/>
</dbReference>
<dbReference type="EvolutionaryTrace" id="P47735"/>
<dbReference type="PRO" id="PR:P47735"/>
<dbReference type="Proteomes" id="UP000006548">
    <property type="component" value="Chromosome 4"/>
</dbReference>
<dbReference type="ExpressionAtlas" id="P47735">
    <property type="expression patterns" value="baseline and differential"/>
</dbReference>
<dbReference type="GO" id="GO:0005886">
    <property type="term" value="C:plasma membrane"/>
    <property type="evidence" value="ECO:0000314"/>
    <property type="project" value="UniProtKB"/>
</dbReference>
<dbReference type="GO" id="GO:0005524">
    <property type="term" value="F:ATP binding"/>
    <property type="evidence" value="ECO:0007669"/>
    <property type="project" value="UniProtKB-KW"/>
</dbReference>
<dbReference type="GO" id="GO:0004672">
    <property type="term" value="F:protein kinase activity"/>
    <property type="evidence" value="ECO:0000314"/>
    <property type="project" value="TAIR"/>
</dbReference>
<dbReference type="GO" id="GO:0106310">
    <property type="term" value="F:protein serine kinase activity"/>
    <property type="evidence" value="ECO:0007669"/>
    <property type="project" value="RHEA"/>
</dbReference>
<dbReference type="GO" id="GO:0004674">
    <property type="term" value="F:protein serine/threonine kinase activity"/>
    <property type="evidence" value="ECO:0007669"/>
    <property type="project" value="UniProtKB-KW"/>
</dbReference>
<dbReference type="GO" id="GO:0004714">
    <property type="term" value="F:transmembrane receptor protein tyrosine kinase activity"/>
    <property type="evidence" value="ECO:0007669"/>
    <property type="project" value="UniProtKB-EC"/>
</dbReference>
<dbReference type="GO" id="GO:0050829">
    <property type="term" value="P:defense response to Gram-negative bacterium"/>
    <property type="evidence" value="ECO:0000315"/>
    <property type="project" value="TAIR"/>
</dbReference>
<dbReference type="GO" id="GO:0010227">
    <property type="term" value="P:floral organ abscission"/>
    <property type="evidence" value="ECO:0000315"/>
    <property type="project" value="TAIR"/>
</dbReference>
<dbReference type="GO" id="GO:0010102">
    <property type="term" value="P:lateral root morphogenesis"/>
    <property type="evidence" value="ECO:0000315"/>
    <property type="project" value="TAIR"/>
</dbReference>
<dbReference type="GO" id="GO:0060866">
    <property type="term" value="P:leaf abscission"/>
    <property type="evidence" value="ECO:0000315"/>
    <property type="project" value="TAIR"/>
</dbReference>
<dbReference type="GO" id="GO:0045490">
    <property type="term" value="P:pectin catabolic process"/>
    <property type="evidence" value="ECO:0000315"/>
    <property type="project" value="TAIR"/>
</dbReference>
<dbReference type="GO" id="GO:0046777">
    <property type="term" value="P:protein autophosphorylation"/>
    <property type="evidence" value="ECO:0000314"/>
    <property type="project" value="TAIR"/>
</dbReference>
<dbReference type="GO" id="GO:0010468">
    <property type="term" value="P:regulation of gene expression"/>
    <property type="evidence" value="ECO:0000315"/>
    <property type="project" value="TAIR"/>
</dbReference>
<dbReference type="FunFam" id="3.80.10.10:FF:000453">
    <property type="entry name" value="Leucine-rich receptor-like protein kinase family protein"/>
    <property type="match status" value="1"/>
</dbReference>
<dbReference type="FunFam" id="1.10.510.10:FF:000417">
    <property type="entry name" value="Leucine-rich repeat receptor-like protein kinase"/>
    <property type="match status" value="1"/>
</dbReference>
<dbReference type="FunFam" id="3.80.10.10:FF:000077">
    <property type="entry name" value="LRR receptor-like serine/threonine-protein kinase ERL1"/>
    <property type="match status" value="1"/>
</dbReference>
<dbReference type="FunFam" id="3.30.200.20:FF:000513">
    <property type="entry name" value="Receptor-like protein kinase HSL1"/>
    <property type="match status" value="1"/>
</dbReference>
<dbReference type="FunFam" id="3.80.10.10:FF:000215">
    <property type="entry name" value="Receptor-like protein kinase HSL1"/>
    <property type="match status" value="1"/>
</dbReference>
<dbReference type="Gene3D" id="3.30.200.20">
    <property type="entry name" value="Phosphorylase Kinase, domain 1"/>
    <property type="match status" value="1"/>
</dbReference>
<dbReference type="Gene3D" id="3.80.10.10">
    <property type="entry name" value="Ribonuclease Inhibitor"/>
    <property type="match status" value="3"/>
</dbReference>
<dbReference type="Gene3D" id="1.10.510.10">
    <property type="entry name" value="Transferase(Phosphotransferase) domain 1"/>
    <property type="match status" value="1"/>
</dbReference>
<dbReference type="InterPro" id="IPR011009">
    <property type="entry name" value="Kinase-like_dom_sf"/>
</dbReference>
<dbReference type="InterPro" id="IPR001611">
    <property type="entry name" value="Leu-rich_rpt"/>
</dbReference>
<dbReference type="InterPro" id="IPR003591">
    <property type="entry name" value="Leu-rich_rpt_typical-subtyp"/>
</dbReference>
<dbReference type="InterPro" id="IPR032675">
    <property type="entry name" value="LRR_dom_sf"/>
</dbReference>
<dbReference type="InterPro" id="IPR013210">
    <property type="entry name" value="LRR_N_plant-typ"/>
</dbReference>
<dbReference type="InterPro" id="IPR050647">
    <property type="entry name" value="Plant_LRR-RLKs"/>
</dbReference>
<dbReference type="InterPro" id="IPR000719">
    <property type="entry name" value="Prot_kinase_dom"/>
</dbReference>
<dbReference type="InterPro" id="IPR017441">
    <property type="entry name" value="Protein_kinase_ATP_BS"/>
</dbReference>
<dbReference type="InterPro" id="IPR008271">
    <property type="entry name" value="Ser/Thr_kinase_AS"/>
</dbReference>
<dbReference type="PANTHER" id="PTHR48056">
    <property type="entry name" value="LRR RECEPTOR-LIKE SERINE/THREONINE-PROTEIN KINASE-RELATED"/>
    <property type="match status" value="1"/>
</dbReference>
<dbReference type="PANTHER" id="PTHR48056:SF84">
    <property type="entry name" value="PROTEIN KINASE DOMAIN-CONTAINING PROTEIN"/>
    <property type="match status" value="1"/>
</dbReference>
<dbReference type="Pfam" id="PF00560">
    <property type="entry name" value="LRR_1"/>
    <property type="match status" value="7"/>
</dbReference>
<dbReference type="Pfam" id="PF13855">
    <property type="entry name" value="LRR_8"/>
    <property type="match status" value="2"/>
</dbReference>
<dbReference type="Pfam" id="PF08263">
    <property type="entry name" value="LRRNT_2"/>
    <property type="match status" value="1"/>
</dbReference>
<dbReference type="Pfam" id="PF00069">
    <property type="entry name" value="Pkinase"/>
    <property type="match status" value="1"/>
</dbReference>
<dbReference type="SMART" id="SM00369">
    <property type="entry name" value="LRR_TYP"/>
    <property type="match status" value="8"/>
</dbReference>
<dbReference type="SMART" id="SM00220">
    <property type="entry name" value="S_TKc"/>
    <property type="match status" value="1"/>
</dbReference>
<dbReference type="SUPFAM" id="SSF52058">
    <property type="entry name" value="L domain-like"/>
    <property type="match status" value="1"/>
</dbReference>
<dbReference type="SUPFAM" id="SSF56112">
    <property type="entry name" value="Protein kinase-like (PK-like)"/>
    <property type="match status" value="1"/>
</dbReference>
<dbReference type="SUPFAM" id="SSF52047">
    <property type="entry name" value="RNI-like"/>
    <property type="match status" value="1"/>
</dbReference>
<dbReference type="PROSITE" id="PS51450">
    <property type="entry name" value="LRR"/>
    <property type="match status" value="16"/>
</dbReference>
<dbReference type="PROSITE" id="PS00107">
    <property type="entry name" value="PROTEIN_KINASE_ATP"/>
    <property type="match status" value="1"/>
</dbReference>
<dbReference type="PROSITE" id="PS50011">
    <property type="entry name" value="PROTEIN_KINASE_DOM"/>
    <property type="match status" value="1"/>
</dbReference>
<dbReference type="PROSITE" id="PS00108">
    <property type="entry name" value="PROTEIN_KINASE_ST"/>
    <property type="match status" value="1"/>
</dbReference>
<proteinExistence type="evidence at protein level"/>
<name>RLK5_ARATH</name>
<feature type="signal peptide" evidence="4">
    <location>
        <begin position="1"/>
        <end position="14"/>
    </location>
</feature>
<feature type="chain" id="PRO_0000024381" description="Receptor-like protein kinase 5">
    <location>
        <begin position="15"/>
        <end position="999"/>
    </location>
</feature>
<feature type="topological domain" description="Extracellular" evidence="4">
    <location>
        <begin position="15"/>
        <end position="621"/>
    </location>
</feature>
<feature type="transmembrane region" description="Helical" evidence="4">
    <location>
        <begin position="622"/>
        <end position="641"/>
    </location>
</feature>
<feature type="topological domain" description="Cytoplasmic" evidence="4">
    <location>
        <begin position="642"/>
        <end position="999"/>
    </location>
</feature>
<feature type="repeat" description="LRR 1">
    <location>
        <begin position="90"/>
        <end position="112"/>
    </location>
</feature>
<feature type="repeat" description="LRR 2">
    <location>
        <begin position="115"/>
        <end position="137"/>
    </location>
</feature>
<feature type="repeat" description="LRR 3">
    <location>
        <begin position="140"/>
        <end position="161"/>
    </location>
</feature>
<feature type="repeat" description="LRR 4">
    <location>
        <begin position="164"/>
        <end position="186"/>
    </location>
</feature>
<feature type="repeat" description="LRR 5">
    <location>
        <begin position="188"/>
        <end position="208"/>
    </location>
</feature>
<feature type="repeat" description="LRR 6">
    <location>
        <begin position="213"/>
        <end position="236"/>
    </location>
</feature>
<feature type="repeat" description="LRR 7">
    <location>
        <begin position="237"/>
        <end position="259"/>
    </location>
</feature>
<feature type="repeat" description="LRR 8">
    <location>
        <begin position="285"/>
        <end position="307"/>
    </location>
</feature>
<feature type="repeat" description="LRR 9">
    <location>
        <begin position="308"/>
        <end position="330"/>
    </location>
</feature>
<feature type="repeat" description="LRR 10">
    <location>
        <begin position="332"/>
        <end position="353"/>
    </location>
</feature>
<feature type="repeat" description="LRR 11">
    <location>
        <begin position="356"/>
        <end position="378"/>
    </location>
</feature>
<feature type="repeat" description="LRR 12">
    <location>
        <begin position="380"/>
        <end position="402"/>
    </location>
</feature>
<feature type="repeat" description="LRR 13">
    <location>
        <begin position="404"/>
        <end position="427"/>
    </location>
</feature>
<feature type="repeat" description="LRR 14">
    <location>
        <begin position="428"/>
        <end position="450"/>
    </location>
</feature>
<feature type="repeat" description="LRR 15">
    <location>
        <begin position="452"/>
        <end position="474"/>
    </location>
</feature>
<feature type="repeat" description="LRR 16">
    <location>
        <begin position="500"/>
        <end position="523"/>
    </location>
</feature>
<feature type="repeat" description="LRR 17">
    <location>
        <begin position="524"/>
        <end position="546"/>
    </location>
</feature>
<feature type="repeat" description="LRR 18">
    <location>
        <begin position="548"/>
        <end position="569"/>
    </location>
</feature>
<feature type="repeat" description="LRR 19">
    <location>
        <begin position="571"/>
        <end position="593"/>
    </location>
</feature>
<feature type="domain" description="Protein kinase" evidence="5">
    <location>
        <begin position="683"/>
        <end position="968"/>
    </location>
</feature>
<feature type="region of interest" description="Disordered" evidence="7">
    <location>
        <begin position="972"/>
        <end position="999"/>
    </location>
</feature>
<feature type="active site" description="Proton acceptor" evidence="5 6">
    <location>
        <position position="819"/>
    </location>
</feature>
<feature type="binding site" evidence="5">
    <location>
        <begin position="689"/>
        <end position="697"/>
    </location>
    <ligand>
        <name>ATP</name>
        <dbReference type="ChEBI" id="CHEBI:30616"/>
    </ligand>
</feature>
<feature type="binding site" evidence="5">
    <location>
        <position position="711"/>
    </location>
    <ligand>
        <name>ATP</name>
        <dbReference type="ChEBI" id="CHEBI:30616"/>
    </ligand>
</feature>
<feature type="modified residue" description="Phosphotyrosine" evidence="2">
    <location>
        <position position="766"/>
    </location>
</feature>
<feature type="modified residue" description="Phosphotyrosine" evidence="1">
    <location>
        <position position="806"/>
    </location>
</feature>
<feature type="modified residue" description="Phosphoserine" evidence="3">
    <location>
        <position position="856"/>
    </location>
</feature>
<feature type="modified residue" description="Phosphotyrosine" evidence="1">
    <location>
        <position position="864"/>
    </location>
</feature>
<feature type="modified residue" description="Phosphotyrosine" evidence="3">
    <location>
        <position position="871"/>
    </location>
</feature>
<feature type="modified residue" description="Phosphothreonine" evidence="3">
    <location>
        <position position="872"/>
    </location>
</feature>
<feature type="glycosylation site" description="N-linked (GlcNAc...) asparagine" evidence="12 14">
    <location>
        <position position="98"/>
    </location>
</feature>
<feature type="glycosylation site" description="N-linked (GlcNAc...) asparagine" evidence="12 14">
    <location>
        <position position="102"/>
    </location>
</feature>
<feature type="glycosylation site" description="N-linked (GlcNAc...) asparagine" evidence="12 14">
    <location>
        <position position="150"/>
    </location>
</feature>
<feature type="glycosylation site" description="N-linked (GlcNAc...) asparagine" evidence="12 14">
    <location>
        <position position="185"/>
    </location>
</feature>
<feature type="glycosylation site" description="N-linked (GlcNAc...) asparagine" evidence="4">
    <location>
        <position position="210"/>
    </location>
</feature>
<feature type="glycosylation site" description="N-linked (GlcNAc...) asparagine" evidence="12 14">
    <location>
        <position position="269"/>
    </location>
</feature>
<feature type="glycosylation site" description="N-linked (GlcNAc...) asparagine" evidence="12 15">
    <location>
        <position position="282"/>
    </location>
</feature>
<feature type="glycosylation site" description="N-linked (GlcNAc...) asparagine" evidence="4">
    <location>
        <position position="452"/>
    </location>
</feature>
<feature type="glycosylation site" description="N-linked (GlcNAc...) asparagine" evidence="12 14">
    <location>
        <position position="576"/>
    </location>
</feature>
<feature type="mutagenesis site" description="Loss of catalytic activity." evidence="13">
    <original>K</original>
    <variation>E</variation>
    <location>
        <position position="711"/>
    </location>
</feature>
<feature type="helix" evidence="16">
    <location>
        <begin position="21"/>
        <end position="33"/>
    </location>
</feature>
<feature type="helix" evidence="16">
    <location>
        <begin position="43"/>
        <end position="46"/>
    </location>
</feature>
<feature type="helix" evidence="16">
    <location>
        <begin position="53"/>
        <end position="55"/>
    </location>
</feature>
<feature type="strand" evidence="16">
    <location>
        <begin position="59"/>
        <end position="61"/>
    </location>
</feature>
<feature type="strand" evidence="16">
    <location>
        <begin position="67"/>
        <end position="71"/>
    </location>
</feature>
<feature type="strand" evidence="16">
    <location>
        <begin position="78"/>
        <end position="80"/>
    </location>
</feature>
<feature type="helix" evidence="16">
    <location>
        <begin position="83"/>
        <end position="87"/>
    </location>
</feature>
<feature type="strand" evidence="16">
    <location>
        <begin position="93"/>
        <end position="95"/>
    </location>
</feature>
<feature type="strand" evidence="16">
    <location>
        <begin position="98"/>
        <end position="104"/>
    </location>
</feature>
<feature type="helix" evidence="16">
    <location>
        <begin position="108"/>
        <end position="110"/>
    </location>
</feature>
<feature type="strand" evidence="16">
    <location>
        <begin position="117"/>
        <end position="120"/>
    </location>
</feature>
<feature type="strand" evidence="16">
    <location>
        <begin position="123"/>
        <end position="129"/>
    </location>
</feature>
<feature type="helix" evidence="16">
    <location>
        <begin position="134"/>
        <end position="137"/>
    </location>
</feature>
<feature type="strand" evidence="16">
    <location>
        <begin position="142"/>
        <end position="145"/>
    </location>
</feature>
<feature type="strand" evidence="16">
    <location>
        <begin position="148"/>
        <end position="154"/>
    </location>
</feature>
<feature type="helix" evidence="16">
    <location>
        <begin position="157"/>
        <end position="161"/>
    </location>
</feature>
<feature type="strand" evidence="16">
    <location>
        <begin position="167"/>
        <end position="169"/>
    </location>
</feature>
<feature type="helix" evidence="16">
    <location>
        <begin position="181"/>
        <end position="185"/>
    </location>
</feature>
<feature type="strand" evidence="16">
    <location>
        <begin position="190"/>
        <end position="193"/>
    </location>
</feature>
<feature type="helix" evidence="16">
    <location>
        <begin position="206"/>
        <end position="210"/>
    </location>
</feature>
<feature type="strand" evidence="16">
    <location>
        <begin position="215"/>
        <end position="218"/>
    </location>
</feature>
<feature type="strand" evidence="16">
    <location>
        <begin position="224"/>
        <end position="226"/>
    </location>
</feature>
<feature type="helix" evidence="16">
    <location>
        <begin position="230"/>
        <end position="234"/>
    </location>
</feature>
<feature type="strand" evidence="16">
    <location>
        <begin position="239"/>
        <end position="242"/>
    </location>
</feature>
<feature type="strand" evidence="16">
    <location>
        <begin position="245"/>
        <end position="250"/>
    </location>
</feature>
<feature type="helix" evidence="16">
    <location>
        <begin position="254"/>
        <end position="258"/>
    </location>
</feature>
<feature type="strand" evidence="16">
    <location>
        <begin position="264"/>
        <end position="266"/>
    </location>
</feature>
<feature type="strand" evidence="16">
    <location>
        <begin position="269"/>
        <end position="272"/>
    </location>
</feature>
<feature type="helix" evidence="16">
    <location>
        <begin position="278"/>
        <end position="282"/>
    </location>
</feature>
<feature type="strand" evidence="16">
    <location>
        <begin position="288"/>
        <end position="290"/>
    </location>
</feature>
<feature type="strand" evidence="17">
    <location>
        <begin position="293"/>
        <end position="296"/>
    </location>
</feature>
<feature type="strand" evidence="16">
    <location>
        <begin position="311"/>
        <end position="313"/>
    </location>
</feature>
<feature type="helix" evidence="16">
    <location>
        <begin position="325"/>
        <end position="329"/>
    </location>
</feature>
<feature type="strand" evidence="16">
    <location>
        <begin position="335"/>
        <end position="337"/>
    </location>
</feature>
<feature type="strand" evidence="16">
    <location>
        <begin position="340"/>
        <end position="346"/>
    </location>
</feature>
<feature type="turn" evidence="16">
    <location>
        <begin position="349"/>
        <end position="354"/>
    </location>
</feature>
<feature type="strand" evidence="16">
    <location>
        <begin position="359"/>
        <end position="361"/>
    </location>
</feature>
<feature type="strand" evidence="16">
    <location>
        <begin position="364"/>
        <end position="369"/>
    </location>
</feature>
<feature type="turn" evidence="16">
    <location>
        <begin position="373"/>
        <end position="378"/>
    </location>
</feature>
<feature type="strand" evidence="16">
    <location>
        <begin position="383"/>
        <end position="385"/>
    </location>
</feature>
<feature type="strand" evidence="16">
    <location>
        <begin position="388"/>
        <end position="393"/>
    </location>
</feature>
<feature type="helix" evidence="16">
    <location>
        <begin position="397"/>
        <end position="401"/>
    </location>
</feature>
<feature type="strand" evidence="16">
    <location>
        <begin position="407"/>
        <end position="409"/>
    </location>
</feature>
<feature type="strand" evidence="16">
    <location>
        <begin position="412"/>
        <end position="418"/>
    </location>
</feature>
<feature type="helix" evidence="16">
    <location>
        <begin position="421"/>
        <end position="423"/>
    </location>
</feature>
<feature type="strand" evidence="16">
    <location>
        <begin position="431"/>
        <end position="433"/>
    </location>
</feature>
<feature type="strand" evidence="16">
    <location>
        <begin position="436"/>
        <end position="441"/>
    </location>
</feature>
<feature type="helix" evidence="16">
    <location>
        <begin position="445"/>
        <end position="449"/>
    </location>
</feature>
<feature type="strand" evidence="16">
    <location>
        <begin position="455"/>
        <end position="457"/>
    </location>
</feature>
<feature type="strand" evidence="16">
    <location>
        <begin position="460"/>
        <end position="465"/>
    </location>
</feature>
<feature type="helix" evidence="16">
    <location>
        <begin position="469"/>
        <end position="473"/>
    </location>
</feature>
<feature type="strand" evidence="16">
    <location>
        <begin position="479"/>
        <end position="481"/>
    </location>
</feature>
<feature type="strand" evidence="16">
    <location>
        <begin position="484"/>
        <end position="490"/>
    </location>
</feature>
<feature type="helix" evidence="16">
    <location>
        <begin position="493"/>
        <end position="497"/>
    </location>
</feature>
<feature type="strand" evidence="16">
    <location>
        <begin position="503"/>
        <end position="505"/>
    </location>
</feature>
<feature type="strand" evidence="16">
    <location>
        <begin position="508"/>
        <end position="513"/>
    </location>
</feature>
<feature type="strand" evidence="16">
    <location>
        <begin position="527"/>
        <end position="529"/>
    </location>
</feature>
<feature type="strand" evidence="16">
    <location>
        <begin position="532"/>
        <end position="535"/>
    </location>
</feature>
<feature type="helix" evidence="16">
    <location>
        <begin position="541"/>
        <end position="545"/>
    </location>
</feature>
<feature type="strand" evidence="16">
    <location>
        <begin position="551"/>
        <end position="553"/>
    </location>
</feature>
<feature type="strand" evidence="16">
    <location>
        <begin position="560"/>
        <end position="562"/>
    </location>
</feature>
<feature type="helix" evidence="16">
    <location>
        <begin position="565"/>
        <end position="569"/>
    </location>
</feature>
<feature type="strand" evidence="16">
    <location>
        <begin position="573"/>
        <end position="576"/>
    </location>
</feature>
<feature type="strand" evidence="16">
    <location>
        <begin position="579"/>
        <end position="585"/>
    </location>
</feature>
<feature type="helix" evidence="16">
    <location>
        <begin position="588"/>
        <end position="590"/>
    </location>
</feature>
<feature type="helix" evidence="16">
    <location>
        <begin position="593"/>
        <end position="598"/>
    </location>
</feature>
<feature type="strand" evidence="16">
    <location>
        <begin position="605"/>
        <end position="609"/>
    </location>
</feature>
<feature type="strand" evidence="16">
    <location>
        <begin position="612"/>
        <end position="614"/>
    </location>
</feature>
<comment type="function">
    <text evidence="8 9 10">Receptor with a dual specificity kinase activity acting on both serine/threonine- and tyrosine-containing substrates that controls floral organ abscission. May interact with the 'INFLORESCENCE DEFICIENT IN ABSCISSION' (IDA) ligands family.</text>
</comment>
<comment type="catalytic activity">
    <reaction>
        <text>L-seryl-[protein] + ATP = O-phospho-L-seryl-[protein] + ADP + H(+)</text>
        <dbReference type="Rhea" id="RHEA:17989"/>
        <dbReference type="Rhea" id="RHEA-COMP:9863"/>
        <dbReference type="Rhea" id="RHEA-COMP:11604"/>
        <dbReference type="ChEBI" id="CHEBI:15378"/>
        <dbReference type="ChEBI" id="CHEBI:29999"/>
        <dbReference type="ChEBI" id="CHEBI:30616"/>
        <dbReference type="ChEBI" id="CHEBI:83421"/>
        <dbReference type="ChEBI" id="CHEBI:456216"/>
        <dbReference type="EC" id="2.7.11.1"/>
    </reaction>
</comment>
<comment type="catalytic activity">
    <reaction>
        <text>L-threonyl-[protein] + ATP = O-phospho-L-threonyl-[protein] + ADP + H(+)</text>
        <dbReference type="Rhea" id="RHEA:46608"/>
        <dbReference type="Rhea" id="RHEA-COMP:11060"/>
        <dbReference type="Rhea" id="RHEA-COMP:11605"/>
        <dbReference type="ChEBI" id="CHEBI:15378"/>
        <dbReference type="ChEBI" id="CHEBI:30013"/>
        <dbReference type="ChEBI" id="CHEBI:30616"/>
        <dbReference type="ChEBI" id="CHEBI:61977"/>
        <dbReference type="ChEBI" id="CHEBI:456216"/>
        <dbReference type="EC" id="2.7.11.1"/>
    </reaction>
</comment>
<comment type="catalytic activity">
    <reaction evidence="6">
        <text>L-tyrosyl-[protein] + ATP = O-phospho-L-tyrosyl-[protein] + ADP + H(+)</text>
        <dbReference type="Rhea" id="RHEA:10596"/>
        <dbReference type="Rhea" id="RHEA-COMP:10136"/>
        <dbReference type="Rhea" id="RHEA-COMP:20101"/>
        <dbReference type="ChEBI" id="CHEBI:15378"/>
        <dbReference type="ChEBI" id="CHEBI:30616"/>
        <dbReference type="ChEBI" id="CHEBI:46858"/>
        <dbReference type="ChEBI" id="CHEBI:61978"/>
        <dbReference type="ChEBI" id="CHEBI:456216"/>
        <dbReference type="EC" id="2.7.10.1"/>
    </reaction>
</comment>
<comment type="cofactor">
    <cofactor>
        <name>Mg(2+)</name>
        <dbReference type="ChEBI" id="CHEBI:18420"/>
    </cofactor>
    <cofactor>
        <name>Mn(2+)</name>
        <dbReference type="ChEBI" id="CHEBI:29035"/>
    </cofactor>
    <text>Have significantly greater activity in the presence of Mn(2+) than Mg(2+).</text>
</comment>
<comment type="subunit">
    <text evidence="11 12">Interacts with CST (PubMed:21628627). Binds to IDA (PubMed:27058169).</text>
</comment>
<comment type="interaction">
    <interactant intactId="EBI-11420624">
        <id>P47735</id>
    </interactant>
    <interactant intactId="EBI-16954682">
        <id>Q9M9S4</id>
        <label>At1g14390</label>
    </interactant>
    <organismsDiffer>false</organismsDiffer>
    <experiments>2</experiments>
</comment>
<comment type="subcellular location">
    <subcellularLocation>
        <location evidence="8">Cell membrane</location>
        <topology evidence="8">Single-pass type I membrane protein</topology>
    </subcellularLocation>
</comment>
<comment type="tissue specificity">
    <text evidence="8">Expressed in roots and rosettes. Expressed at the base of petioles and pedicels, and in the abscission zones of the floral organs.</text>
</comment>
<comment type="PTM">
    <text>Autophosphorylated on Ser, Thr and Tyr residues.</text>
</comment>
<comment type="disruption phenotype">
    <text evidence="9 10">No visible phenotype; due to the redundancy with HSL2. Hae and hsl2 double mutants have a strong abscission defect.</text>
</comment>
<comment type="miscellaneous">
    <text>The name HAESA derives from a Latin word meaning 'to adhere to'.</text>
</comment>
<comment type="similarity">
    <text evidence="5">Belongs to the protein kinase superfamily. Ser/Thr protein kinase family.</text>
</comment>
<organism>
    <name type="scientific">Arabidopsis thaliana</name>
    <name type="common">Mouse-ear cress</name>
    <dbReference type="NCBI Taxonomy" id="3702"/>
    <lineage>
        <taxon>Eukaryota</taxon>
        <taxon>Viridiplantae</taxon>
        <taxon>Streptophyta</taxon>
        <taxon>Embryophyta</taxon>
        <taxon>Tracheophyta</taxon>
        <taxon>Spermatophyta</taxon>
        <taxon>Magnoliopsida</taxon>
        <taxon>eudicotyledons</taxon>
        <taxon>Gunneridae</taxon>
        <taxon>Pentapetalae</taxon>
        <taxon>rosids</taxon>
        <taxon>malvids</taxon>
        <taxon>Brassicales</taxon>
        <taxon>Brassicaceae</taxon>
        <taxon>Camelineae</taxon>
        <taxon>Arabidopsis</taxon>
    </lineage>
</organism>
<keyword id="KW-0002">3D-structure</keyword>
<keyword id="KW-0067">ATP-binding</keyword>
<keyword id="KW-1003">Cell membrane</keyword>
<keyword id="KW-0325">Glycoprotein</keyword>
<keyword id="KW-0418">Kinase</keyword>
<keyword id="KW-0433">Leucine-rich repeat</keyword>
<keyword id="KW-0472">Membrane</keyword>
<keyword id="KW-0547">Nucleotide-binding</keyword>
<keyword id="KW-0597">Phosphoprotein</keyword>
<keyword id="KW-1185">Reference proteome</keyword>
<keyword id="KW-0677">Repeat</keyword>
<keyword id="KW-0723">Serine/threonine-protein kinase</keyword>
<keyword id="KW-0732">Signal</keyword>
<keyword id="KW-0808">Transferase</keyword>
<keyword id="KW-0812">Transmembrane</keyword>
<keyword id="KW-1133">Transmembrane helix</keyword>
<reference key="1">
    <citation type="journal article" date="1993" name="Plant J.">
        <title>Receptor-like protein kinase genes of Arabidopsis thaliana.</title>
        <authorList>
            <person name="Walker J.C."/>
        </authorList>
    </citation>
    <scope>NUCLEOTIDE SEQUENCE [MRNA]</scope>
    <source>
        <strain>cv. Columbia</strain>
    </source>
</reference>
<reference key="2">
    <citation type="journal article" date="2010" name="BMC Genomics">
        <title>Genome-wide cloning and sequence analysis of leucine-rich repeat receptor-like protein kinase genes in Arabidopsis thaliana.</title>
        <authorList>
            <person name="Gou X."/>
            <person name="He K."/>
            <person name="Yang H."/>
            <person name="Yuan T."/>
            <person name="Lin H."/>
            <person name="Clouse S.D."/>
            <person name="Li J."/>
        </authorList>
    </citation>
    <scope>NUCLEOTIDE SEQUENCE [MRNA]</scope>
    <source>
        <strain>cv. Columbia</strain>
    </source>
</reference>
<reference key="3">
    <citation type="journal article" date="1999" name="Nature">
        <title>Sequence and analysis of chromosome 4 of the plant Arabidopsis thaliana.</title>
        <authorList>
            <person name="Mayer K.F.X."/>
            <person name="Schueller C."/>
            <person name="Wambutt R."/>
            <person name="Murphy G."/>
            <person name="Volckaert G."/>
            <person name="Pohl T."/>
            <person name="Duesterhoeft A."/>
            <person name="Stiekema W."/>
            <person name="Entian K.-D."/>
            <person name="Terryn N."/>
            <person name="Harris B."/>
            <person name="Ansorge W."/>
            <person name="Brandt P."/>
            <person name="Grivell L.A."/>
            <person name="Rieger M."/>
            <person name="Weichselgartner M."/>
            <person name="de Simone V."/>
            <person name="Obermaier B."/>
            <person name="Mache R."/>
            <person name="Mueller M."/>
            <person name="Kreis M."/>
            <person name="Delseny M."/>
            <person name="Puigdomenech P."/>
            <person name="Watson M."/>
            <person name="Schmidtheini T."/>
            <person name="Reichert B."/>
            <person name="Portetelle D."/>
            <person name="Perez-Alonso M."/>
            <person name="Boutry M."/>
            <person name="Bancroft I."/>
            <person name="Vos P."/>
            <person name="Hoheisel J."/>
            <person name="Zimmermann W."/>
            <person name="Wedler H."/>
            <person name="Ridley P."/>
            <person name="Langham S.-A."/>
            <person name="McCullagh B."/>
            <person name="Bilham L."/>
            <person name="Robben J."/>
            <person name="van der Schueren J."/>
            <person name="Grymonprez B."/>
            <person name="Chuang Y.-J."/>
            <person name="Vandenbussche F."/>
            <person name="Braeken M."/>
            <person name="Weltjens I."/>
            <person name="Voet M."/>
            <person name="Bastiaens I."/>
            <person name="Aert R."/>
            <person name="Defoor E."/>
            <person name="Weitzenegger T."/>
            <person name="Bothe G."/>
            <person name="Ramsperger U."/>
            <person name="Hilbert H."/>
            <person name="Braun M."/>
            <person name="Holzer E."/>
            <person name="Brandt A."/>
            <person name="Peters S."/>
            <person name="van Staveren M."/>
            <person name="Dirkse W."/>
            <person name="Mooijman P."/>
            <person name="Klein Lankhorst R."/>
            <person name="Rose M."/>
            <person name="Hauf J."/>
            <person name="Koetter P."/>
            <person name="Berneiser S."/>
            <person name="Hempel S."/>
            <person name="Feldpausch M."/>
            <person name="Lamberth S."/>
            <person name="Van den Daele H."/>
            <person name="De Keyser A."/>
            <person name="Buysshaert C."/>
            <person name="Gielen J."/>
            <person name="Villarroel R."/>
            <person name="De Clercq R."/>
            <person name="van Montagu M."/>
            <person name="Rogers J."/>
            <person name="Cronin A."/>
            <person name="Quail M.A."/>
            <person name="Bray-Allen S."/>
            <person name="Clark L."/>
            <person name="Doggett J."/>
            <person name="Hall S."/>
            <person name="Kay M."/>
            <person name="Lennard N."/>
            <person name="McLay K."/>
            <person name="Mayes R."/>
            <person name="Pettett A."/>
            <person name="Rajandream M.A."/>
            <person name="Lyne M."/>
            <person name="Benes V."/>
            <person name="Rechmann S."/>
            <person name="Borkova D."/>
            <person name="Bloecker H."/>
            <person name="Scharfe M."/>
            <person name="Grimm M."/>
            <person name="Loehnert T.-H."/>
            <person name="Dose S."/>
            <person name="de Haan M."/>
            <person name="Maarse A.C."/>
            <person name="Schaefer M."/>
            <person name="Mueller-Auer S."/>
            <person name="Gabel C."/>
            <person name="Fuchs M."/>
            <person name="Fartmann B."/>
            <person name="Granderath K."/>
            <person name="Dauner D."/>
            <person name="Herzl A."/>
            <person name="Neumann S."/>
            <person name="Argiriou A."/>
            <person name="Vitale D."/>
            <person name="Liguori R."/>
            <person name="Piravandi E."/>
            <person name="Massenet O."/>
            <person name="Quigley F."/>
            <person name="Clabauld G."/>
            <person name="Muendlein A."/>
            <person name="Felber R."/>
            <person name="Schnabl S."/>
            <person name="Hiller R."/>
            <person name="Schmidt W."/>
            <person name="Lecharny A."/>
            <person name="Aubourg S."/>
            <person name="Chefdor F."/>
            <person name="Cooke R."/>
            <person name="Berger C."/>
            <person name="Monfort A."/>
            <person name="Casacuberta E."/>
            <person name="Gibbons T."/>
            <person name="Weber N."/>
            <person name="Vandenbol M."/>
            <person name="Bargues M."/>
            <person name="Terol J."/>
            <person name="Torres A."/>
            <person name="Perez-Perez A."/>
            <person name="Purnelle B."/>
            <person name="Bent E."/>
            <person name="Johnson S."/>
            <person name="Tacon D."/>
            <person name="Jesse T."/>
            <person name="Heijnen L."/>
            <person name="Schwarz S."/>
            <person name="Scholler P."/>
            <person name="Heber S."/>
            <person name="Francs P."/>
            <person name="Bielke C."/>
            <person name="Frishman D."/>
            <person name="Haase D."/>
            <person name="Lemcke K."/>
            <person name="Mewes H.-W."/>
            <person name="Stocker S."/>
            <person name="Zaccaria P."/>
            <person name="Bevan M."/>
            <person name="Wilson R.K."/>
            <person name="de la Bastide M."/>
            <person name="Habermann K."/>
            <person name="Parnell L."/>
            <person name="Dedhia N."/>
            <person name="Gnoj L."/>
            <person name="Schutz K."/>
            <person name="Huang E."/>
            <person name="Spiegel L."/>
            <person name="Sekhon M."/>
            <person name="Murray J."/>
            <person name="Sheet P."/>
            <person name="Cordes M."/>
            <person name="Abu-Threideh J."/>
            <person name="Stoneking T."/>
            <person name="Kalicki J."/>
            <person name="Graves T."/>
            <person name="Harmon G."/>
            <person name="Edwards J."/>
            <person name="Latreille P."/>
            <person name="Courtney L."/>
            <person name="Cloud J."/>
            <person name="Abbott A."/>
            <person name="Scott K."/>
            <person name="Johnson D."/>
            <person name="Minx P."/>
            <person name="Bentley D."/>
            <person name="Fulton B."/>
            <person name="Miller N."/>
            <person name="Greco T."/>
            <person name="Kemp K."/>
            <person name="Kramer J."/>
            <person name="Fulton L."/>
            <person name="Mardis E."/>
            <person name="Dante M."/>
            <person name="Pepin K."/>
            <person name="Hillier L.W."/>
            <person name="Nelson J."/>
            <person name="Spieth J."/>
            <person name="Ryan E."/>
            <person name="Andrews S."/>
            <person name="Geisel C."/>
            <person name="Layman D."/>
            <person name="Du H."/>
            <person name="Ali J."/>
            <person name="Berghoff A."/>
            <person name="Jones K."/>
            <person name="Drone K."/>
            <person name="Cotton M."/>
            <person name="Joshu C."/>
            <person name="Antonoiu B."/>
            <person name="Zidanic M."/>
            <person name="Strong C."/>
            <person name="Sun H."/>
            <person name="Lamar B."/>
            <person name="Yordan C."/>
            <person name="Ma P."/>
            <person name="Zhong J."/>
            <person name="Preston R."/>
            <person name="Vil D."/>
            <person name="Shekher M."/>
            <person name="Matero A."/>
            <person name="Shah R."/>
            <person name="Swaby I.K."/>
            <person name="O'Shaughnessy A."/>
            <person name="Rodriguez M."/>
            <person name="Hoffman J."/>
            <person name="Till S."/>
            <person name="Granat S."/>
            <person name="Shohdy N."/>
            <person name="Hasegawa A."/>
            <person name="Hameed A."/>
            <person name="Lodhi M."/>
            <person name="Johnson A."/>
            <person name="Chen E."/>
            <person name="Marra M.A."/>
            <person name="Martienssen R."/>
            <person name="McCombie W.R."/>
        </authorList>
    </citation>
    <scope>NUCLEOTIDE SEQUENCE [LARGE SCALE GENOMIC DNA]</scope>
    <source>
        <strain>cv. Columbia</strain>
    </source>
</reference>
<reference key="4">
    <citation type="journal article" date="2017" name="Plant J.">
        <title>Araport11: a complete reannotation of the Arabidopsis thaliana reference genome.</title>
        <authorList>
            <person name="Cheng C.Y."/>
            <person name="Krishnakumar V."/>
            <person name="Chan A.P."/>
            <person name="Thibaud-Nissen F."/>
            <person name="Schobel S."/>
            <person name="Town C.D."/>
        </authorList>
    </citation>
    <scope>GENOME REANNOTATION</scope>
    <source>
        <strain>cv. Columbia</strain>
    </source>
</reference>
<reference key="5">
    <citation type="journal article" date="1994" name="Biochim. Biophys. Acta">
        <title>Biochemical properties of the autophosphorylation of RLK5, a receptor-like protein kinase from Arabidopsis thaliana.</title>
        <authorList>
            <person name="Horn M.A."/>
            <person name="Walker J.C."/>
        </authorList>
    </citation>
    <scope>CHARACTERIZATION</scope>
    <scope>MUTAGENESIS OF LYS-711</scope>
</reference>
<reference key="6">
    <citation type="journal article" date="2000" name="Genes Dev.">
        <title>HAESA, an Arabidopsis leucine-rich repeat receptor kinase, controls floral organ abscission.</title>
        <authorList>
            <person name="Jinn T.-L."/>
            <person name="Stone J.M."/>
            <person name="Walker J.C."/>
        </authorList>
    </citation>
    <scope>FUNCTION</scope>
    <scope>AUTOPHOSPHORYLATION</scope>
    <scope>SUBCELLULAR LOCATION</scope>
    <scope>TISSUE SPECIFICITY</scope>
</reference>
<reference key="7">
    <citation type="journal article" date="2008" name="Plant Cell">
        <title>The EPIP peptide of INFLORESCENCE DEFICIENT IN ABSCISSION is sufficient to induce abscission in arabidopsis through the receptor-like kinases HAESA and HAESA-LIKE2.</title>
        <authorList>
            <person name="Stenvik G.-E."/>
            <person name="Tandstad N.M."/>
            <person name="Guo Y."/>
            <person name="Shi C.-L."/>
            <person name="Kristiansen W."/>
            <person name="Holmgren A."/>
            <person name="Clark S.E."/>
            <person name="Aalen R.B."/>
            <person name="Butenko M.A."/>
        </authorList>
    </citation>
    <scope>FUNCTION</scope>
    <scope>DISRUPTION PHENOTYPE</scope>
</reference>
<reference key="8">
    <citation type="journal article" date="2008" name="Proc. Natl. Acad. Sci. U.S.A.">
        <title>Regulation of floral organ abscission in Arabidopsis thaliana.</title>
        <authorList>
            <person name="Cho S.K."/>
            <person name="Larue C.T."/>
            <person name="Chevalier D."/>
            <person name="Wang H."/>
            <person name="Jinn T.-L."/>
            <person name="Zhang S."/>
            <person name="Walker J.C."/>
        </authorList>
    </citation>
    <scope>FUNCTION</scope>
    <scope>DISRUPTION PHENOTYPE</scope>
</reference>
<reference key="9">
    <citation type="journal article" date="2009" name="Proc. Natl. Acad. Sci. U.S.A.">
        <title>Tyrosine phosphorylation of the BRI1 receptor kinase emerges as a component of brassinosteroid signaling in Arabidopsis.</title>
        <authorList>
            <person name="Oh M.-H."/>
            <person name="Wang X."/>
            <person name="Kota U."/>
            <person name="Goshe M.B."/>
            <person name="Clouse S.D."/>
            <person name="Huber S.C."/>
        </authorList>
    </citation>
    <scope>AUTOPHOSPHORYLATION</scope>
</reference>
<reference key="10">
    <citation type="journal article" date="2011" name="Plant Physiol.">
        <title>CAST AWAY, a membrane-associated receptor-like kinase, inhibits organ abscission in Arabidopsis.</title>
        <authorList>
            <person name="Burr C.A."/>
            <person name="Leslie M.E."/>
            <person name="Orlowski S.K."/>
            <person name="Chen I."/>
            <person name="Wright C.E."/>
            <person name="Daniels M.J."/>
            <person name="Liljegren S.J."/>
        </authorList>
    </citation>
    <scope>INTERACTION WITH CST</scope>
</reference>
<reference key="11">
    <citation type="journal article" date="2016" name="Elife">
        <title>Mechanistic insight into a peptide hormone signaling complex mediating floral organ abscission.</title>
        <authorList>
            <person name="Santiago J."/>
            <person name="Brandt B."/>
            <person name="Wildhagen M."/>
            <person name="Hohmann U."/>
            <person name="Hothorn L.A."/>
            <person name="Butenko M.A."/>
            <person name="Hothorn M."/>
        </authorList>
    </citation>
    <scope>X-RAY CRYSTALLOGRAPHY (1.74 ANGSTROMS) OF 20-620 IN COMPLEX WITH IDA</scope>
    <scope>GLYCOSYLATION AT ASN-98; ASN-102; ASN-150; ASN-185; ASN-269; ASN-282 AND ASN-576</scope>
    <scope>INTERACTION WITH IDA</scope>
</reference>
<accession>P47735</accession>
<accession>C0LGR4</accession>
<protein>
    <recommendedName>
        <fullName>Receptor-like protein kinase 5</fullName>
        <ecNumber>2.7.10.1</ecNumber>
        <ecNumber>2.7.11.1</ecNumber>
    </recommendedName>
    <alternativeName>
        <fullName>Protein HAESA</fullName>
    </alternativeName>
</protein>
<sequence>MLYCLILLLCLSSTYLPSLSLNQDATILRQAKLGLSDPAQSLSSWSDNNDVTPCKWLGVSCDATSNVVSVDLSSFMLVGPFPSILCHLPSLHSLSLYNNSINGSLSADDFDTCHNLISLDLSENLLVGSIPKSLPFNLPNLKFLEISGNNLSDTIPSSFGEFRKLESLNLAGNFLSGTIPASLGNVTTLKELKLAYNLFSPSQIPSQLGNLTELQVLWLAGCNLVGPIPPSLSRLTSLVNLDLTFNQLTGSIPSWITQLKTVEQIELFNNSFSGELPESMGNMTTLKRFDASMNKLTGKIPDNLNLLNLESLNLFENMLEGPLPESITRSKTLSELKLFNNRLTGVLPSQLGANSPLQYVDLSYNRFSGEIPANVCGEGKLEYLILIDNSFSGEISNNLGKCKSLTRVRLSNNKLSGQIPHGFWGLPRLSLLELSDNSFTGSIPKTIIGAKNLSNLRISKNRFSGSIPNEIGSLNGIIEISGAENDFSGEIPESLVKLKQLSRLDLSKNQLSGEIPRELRGWKNLNELNLANNHLSGEIPKEVGILPVLNYLDLSSNQFSGEIPLELQNLKLNVLNLSYNHLSGKIPPLYANKIYAHDFIGNPGLCVDLDGLCRKITRSKNIGYVWILLTIFLLAGLVFVVGIVMFIAKCRKLRALKSSTLAASKWRSFHKLHFSEHEIADCLDEKNVIGFGSSGKVYKVELRGGEVVAVKKLNKSVKGGDDEYSSDSLNRDVFAAEVETLGTIRHKSIVRLWCCCSSGDCKLLVYEYMPNGSLADVLHGDRKGGVVLGWPERLRIALDAAEGLSYLHHDCVPPIVHRDVKSSNILLDSDYGAKVADFGIAKVGQMSGSKTPEAMSGIAGSCGYIAPEYVYTLRVNEKSDIYSFGVVLLELVTGKQPTDSELGDKDMAKWVCTALDKCGLEPVIDPKLDLKFKEEISKVIHIGLLCTSPLPLNRPSMRKVVIMLQEVSGAVPCSSPNTSKRSKTGGKLSPYYTEDLNSV</sequence>